<keyword id="KW-0025">Alternative splicing</keyword>
<keyword id="KW-0963">Cytoplasm</keyword>
<keyword id="KW-0391">Immunity</keyword>
<keyword id="KW-0399">Innate immunity</keyword>
<keyword id="KW-0479">Metal-binding</keyword>
<keyword id="KW-1185">Reference proteome</keyword>
<keyword id="KW-0808">Transferase</keyword>
<keyword id="KW-0833">Ubl conjugation pathway</keyword>
<keyword id="KW-0862">Zinc</keyword>
<keyword id="KW-0863">Zinc-finger</keyword>
<accession>Q8CJC5</accession>
<accession>Q8BS05</accession>
<name>NEUL3_MOUSE</name>
<dbReference type="EC" id="2.3.2.27"/>
<dbReference type="EMBL" id="AF321278">
    <property type="protein sequence ID" value="AAN16205.1"/>
    <property type="molecule type" value="mRNA"/>
</dbReference>
<dbReference type="EMBL" id="AK040949">
    <property type="protein sequence ID" value="BAC30757.1"/>
    <property type="status" value="ALT_INIT"/>
    <property type="molecule type" value="mRNA"/>
</dbReference>
<dbReference type="EMBL" id="AK156207">
    <property type="protein sequence ID" value="BAE33626.1"/>
    <property type="molecule type" value="mRNA"/>
</dbReference>
<dbReference type="EMBL" id="BC056622">
    <property type="protein sequence ID" value="AAH56622.1"/>
    <property type="molecule type" value="mRNA"/>
</dbReference>
<dbReference type="CCDS" id="CCDS14875.1">
    <molecule id="Q8CJC5-1"/>
</dbReference>
<dbReference type="RefSeq" id="NP_700457.1">
    <molecule id="Q8CJC5-1"/>
    <property type="nucleotide sequence ID" value="NM_153408.2"/>
</dbReference>
<dbReference type="RefSeq" id="XP_006495911.1">
    <molecule id="Q8CJC5-1"/>
    <property type="nucleotide sequence ID" value="XM_006495848.4"/>
</dbReference>
<dbReference type="SMR" id="Q8CJC5"/>
<dbReference type="FunCoup" id="Q8CJC5">
    <property type="interactions" value="161"/>
</dbReference>
<dbReference type="STRING" id="10090.ENSMUSP00000055437"/>
<dbReference type="iPTMnet" id="Q8CJC5"/>
<dbReference type="PhosphoSitePlus" id="Q8CJC5"/>
<dbReference type="PaxDb" id="10090-ENSMUSP00000055437"/>
<dbReference type="ProteomicsDB" id="287384">
    <molecule id="Q8CJC5-1"/>
</dbReference>
<dbReference type="ProteomicsDB" id="287385">
    <molecule id="Q8CJC5-2"/>
</dbReference>
<dbReference type="Antibodypedia" id="74844">
    <property type="antibodies" value="27 antibodies from 8 providers"/>
</dbReference>
<dbReference type="DNASU" id="214854"/>
<dbReference type="Ensembl" id="ENSMUST00000056946.8">
    <molecule id="Q8CJC5-1"/>
    <property type="protein sequence ID" value="ENSMUSP00000055437.7"/>
    <property type="gene ID" value="ENSMUSG00000047180.9"/>
</dbReference>
<dbReference type="GeneID" id="214854"/>
<dbReference type="KEGG" id="mmu:214854"/>
<dbReference type="UCSC" id="uc007aps.1">
    <molecule id="Q8CJC5-1"/>
    <property type="organism name" value="mouse"/>
</dbReference>
<dbReference type="UCSC" id="uc007apt.1">
    <molecule id="Q8CJC5-2"/>
    <property type="organism name" value="mouse"/>
</dbReference>
<dbReference type="AGR" id="MGI:2429944"/>
<dbReference type="CTD" id="93082"/>
<dbReference type="MGI" id="MGI:2429944">
    <property type="gene designation" value="Neurl3"/>
</dbReference>
<dbReference type="VEuPathDB" id="HostDB:ENSMUSG00000047180"/>
<dbReference type="eggNOG" id="KOG4625">
    <property type="taxonomic scope" value="Eukaryota"/>
</dbReference>
<dbReference type="GeneTree" id="ENSGT00940000162540"/>
<dbReference type="HOGENOM" id="CLU_090535_0_0_1"/>
<dbReference type="InParanoid" id="Q8CJC5"/>
<dbReference type="OMA" id="HTHFCSS"/>
<dbReference type="OrthoDB" id="6078042at2759"/>
<dbReference type="PhylomeDB" id="Q8CJC5"/>
<dbReference type="TreeFam" id="TF314368"/>
<dbReference type="UniPathway" id="UPA00143"/>
<dbReference type="BioGRID-ORCS" id="214854">
    <property type="hits" value="3 hits in 79 CRISPR screens"/>
</dbReference>
<dbReference type="PRO" id="PR:Q8CJC5"/>
<dbReference type="Proteomes" id="UP000000589">
    <property type="component" value="Chromosome 1"/>
</dbReference>
<dbReference type="RNAct" id="Q8CJC5">
    <property type="molecule type" value="protein"/>
</dbReference>
<dbReference type="Bgee" id="ENSMUSG00000047180">
    <property type="expression patterns" value="Expressed in granulocyte and 77 other cell types or tissues"/>
</dbReference>
<dbReference type="ExpressionAtlas" id="Q8CJC5">
    <property type="expression patterns" value="baseline and differential"/>
</dbReference>
<dbReference type="GO" id="GO:0005737">
    <property type="term" value="C:cytoplasm"/>
    <property type="evidence" value="ECO:0007669"/>
    <property type="project" value="UniProtKB-SubCell"/>
</dbReference>
<dbReference type="GO" id="GO:0061630">
    <property type="term" value="F:ubiquitin protein ligase activity"/>
    <property type="evidence" value="ECO:0000316"/>
    <property type="project" value="MGI"/>
</dbReference>
<dbReference type="GO" id="GO:0008270">
    <property type="term" value="F:zinc ion binding"/>
    <property type="evidence" value="ECO:0007669"/>
    <property type="project" value="UniProtKB-KW"/>
</dbReference>
<dbReference type="GO" id="GO:0045087">
    <property type="term" value="P:innate immune response"/>
    <property type="evidence" value="ECO:0007669"/>
    <property type="project" value="UniProtKB-KW"/>
</dbReference>
<dbReference type="GO" id="GO:1901800">
    <property type="term" value="P:positive regulation of proteasomal protein catabolic process"/>
    <property type="evidence" value="ECO:0007669"/>
    <property type="project" value="Ensembl"/>
</dbReference>
<dbReference type="GO" id="GO:0016567">
    <property type="term" value="P:protein ubiquitination"/>
    <property type="evidence" value="ECO:0000316"/>
    <property type="project" value="MGI"/>
</dbReference>
<dbReference type="CDD" id="cd16552">
    <property type="entry name" value="RING-HC_NEURL3"/>
    <property type="match status" value="1"/>
</dbReference>
<dbReference type="FunFam" id="2.60.120.920:FF:000050">
    <property type="entry name" value="Neuralized E3 ubiquitin protein ligase 3"/>
    <property type="match status" value="1"/>
</dbReference>
<dbReference type="Gene3D" id="2.60.120.920">
    <property type="match status" value="1"/>
</dbReference>
<dbReference type="Gene3D" id="3.30.40.10">
    <property type="entry name" value="Zinc/RING finger domain, C3HC4 (zinc finger)"/>
    <property type="match status" value="1"/>
</dbReference>
<dbReference type="InterPro" id="IPR043136">
    <property type="entry name" value="B30.2/SPRY_sf"/>
</dbReference>
<dbReference type="InterPro" id="IPR037962">
    <property type="entry name" value="Neuralized"/>
</dbReference>
<dbReference type="InterPro" id="IPR006573">
    <property type="entry name" value="NHR_dom"/>
</dbReference>
<dbReference type="InterPro" id="IPR001841">
    <property type="entry name" value="Znf_RING"/>
</dbReference>
<dbReference type="InterPro" id="IPR013083">
    <property type="entry name" value="Znf_RING/FYVE/PHD"/>
</dbReference>
<dbReference type="PANTHER" id="PTHR12429">
    <property type="entry name" value="NEURALIZED"/>
    <property type="match status" value="1"/>
</dbReference>
<dbReference type="PANTHER" id="PTHR12429:SF8">
    <property type="entry name" value="NEURALIZED-LIKE PROTEIN 2"/>
    <property type="match status" value="1"/>
</dbReference>
<dbReference type="Pfam" id="PF07177">
    <property type="entry name" value="Neuralized"/>
    <property type="match status" value="1"/>
</dbReference>
<dbReference type="Pfam" id="PF13920">
    <property type="entry name" value="zf-C3HC4_3"/>
    <property type="match status" value="1"/>
</dbReference>
<dbReference type="SMART" id="SM00588">
    <property type="entry name" value="NEUZ"/>
    <property type="match status" value="1"/>
</dbReference>
<dbReference type="SMART" id="SM00184">
    <property type="entry name" value="RING"/>
    <property type="match status" value="1"/>
</dbReference>
<dbReference type="SUPFAM" id="SSF57850">
    <property type="entry name" value="RING/U-box"/>
    <property type="match status" value="1"/>
</dbReference>
<dbReference type="PROSITE" id="PS51065">
    <property type="entry name" value="NHR"/>
    <property type="match status" value="1"/>
</dbReference>
<dbReference type="PROSITE" id="PS50089">
    <property type="entry name" value="ZF_RING_2"/>
    <property type="match status" value="1"/>
</dbReference>
<comment type="function">
    <text evidence="1 5 6">E3 ubiquitin-protein ligase that plays a role in various biological processes such as lung development or innate immunity (PubMed:15936721, PubMed:35792897). Seems to utilize UBE2E1. Promotes innate antiviral response by catalyzing 'Lys-63'-linked ubiquitination of IRF7 (PubMed:35792897). Plays an essential role in TLR4-mediated activation of MAPK pathways by promoting 'Lys-48'-linked polyubiquitination of the phosphatase DUSP1/MKP1 (By similarity).</text>
</comment>
<comment type="catalytic activity">
    <reaction>
        <text>S-ubiquitinyl-[E2 ubiquitin-conjugating enzyme]-L-cysteine + [acceptor protein]-L-lysine = [E2 ubiquitin-conjugating enzyme]-L-cysteine + N(6)-ubiquitinyl-[acceptor protein]-L-lysine.</text>
        <dbReference type="EC" id="2.3.2.27"/>
    </reaction>
</comment>
<comment type="pathway">
    <text>Protein modification; protein ubiquitination.</text>
</comment>
<comment type="subcellular location">
    <subcellularLocation>
        <location evidence="1">Cytoplasm</location>
    </subcellularLocation>
</comment>
<comment type="alternative products">
    <event type="alternative splicing"/>
    <isoform>
        <id>Q8CJC5-1</id>
        <name>1</name>
        <sequence type="displayed"/>
    </isoform>
    <isoform>
        <id>Q8CJC5-2</id>
        <name>2</name>
        <sequence type="described" ref="VSP_032400 VSP_032401"/>
    </isoform>
</comment>
<comment type="tissue specificity">
    <text evidence="5">Expressed in alveolar epithelial type II cells.</text>
</comment>
<comment type="induction">
    <text evidence="4 5">Induced in lung during endotoxemia. By LPS and inflammatory cytokines in alveolar epithelial type II cells.</text>
</comment>
<comment type="disruption phenotype">
    <text evidence="6">Mutant mice produce less type I IFNs and exhibit increased susceptibility to viral infection.</text>
</comment>
<comment type="sequence caution" evidence="8">
    <conflict type="erroneous initiation">
        <sequence resource="EMBL-CDS" id="BAC30757"/>
    </conflict>
    <text>Extended N-terminus.</text>
</comment>
<proteinExistence type="evidence at transcript level"/>
<sequence length="254" mass="28040">MGSLLSPEANAEVPREALSFHGNATGAQVHLDDQRSTARRRSTFHDGIVFSQRPVWPGERVALRVLRHEEGWCGGLRVGFTRLDPAQVAASCLPPFVCPDLEEQSPTWAALLPEGFVRAGNVVCFWVNRRGWLFAKVNAGRPLLLRKDVLVQGAPLWAVMDVYGTTKAIELLDPKANAWIRSGEPVPESEVISGEECVICFHNTANTRLMPCGHSHFCGSCAWHIFKDTARCPICRWQIEEVAVVSSLKAEEGS</sequence>
<reference key="1">
    <citation type="journal article" date="2002" name="Am. J. Physiol.">
        <title>Glucocorticoid-attenuated response genes induced in the lung during endotoxemia.</title>
        <authorList>
            <person name="Smith J.B."/>
            <person name="Nguyen T.T."/>
            <person name="Hughes H.J."/>
            <person name="Herschman H.R."/>
            <person name="Widney D.P."/>
            <person name="Bui K.C."/>
            <person name="Rovai L.E."/>
        </authorList>
    </citation>
    <scope>NUCLEOTIDE SEQUENCE [MRNA] (ISOFORM 1)</scope>
    <scope>INDUCTION</scope>
    <source>
        <strain>Swiss Webster</strain>
    </source>
</reference>
<reference key="2">
    <citation type="journal article" date="2005" name="Science">
        <title>The transcriptional landscape of the mammalian genome.</title>
        <authorList>
            <person name="Carninci P."/>
            <person name="Kasukawa T."/>
            <person name="Katayama S."/>
            <person name="Gough J."/>
            <person name="Frith M.C."/>
            <person name="Maeda N."/>
            <person name="Oyama R."/>
            <person name="Ravasi T."/>
            <person name="Lenhard B."/>
            <person name="Wells C."/>
            <person name="Kodzius R."/>
            <person name="Shimokawa K."/>
            <person name="Bajic V.B."/>
            <person name="Brenner S.E."/>
            <person name="Batalov S."/>
            <person name="Forrest A.R."/>
            <person name="Zavolan M."/>
            <person name="Davis M.J."/>
            <person name="Wilming L.G."/>
            <person name="Aidinis V."/>
            <person name="Allen J.E."/>
            <person name="Ambesi-Impiombato A."/>
            <person name="Apweiler R."/>
            <person name="Aturaliya R.N."/>
            <person name="Bailey T.L."/>
            <person name="Bansal M."/>
            <person name="Baxter L."/>
            <person name="Beisel K.W."/>
            <person name="Bersano T."/>
            <person name="Bono H."/>
            <person name="Chalk A.M."/>
            <person name="Chiu K.P."/>
            <person name="Choudhary V."/>
            <person name="Christoffels A."/>
            <person name="Clutterbuck D.R."/>
            <person name="Crowe M.L."/>
            <person name="Dalla E."/>
            <person name="Dalrymple B.P."/>
            <person name="de Bono B."/>
            <person name="Della Gatta G."/>
            <person name="di Bernardo D."/>
            <person name="Down T."/>
            <person name="Engstrom P."/>
            <person name="Fagiolini M."/>
            <person name="Faulkner G."/>
            <person name="Fletcher C.F."/>
            <person name="Fukushima T."/>
            <person name="Furuno M."/>
            <person name="Futaki S."/>
            <person name="Gariboldi M."/>
            <person name="Georgii-Hemming P."/>
            <person name="Gingeras T.R."/>
            <person name="Gojobori T."/>
            <person name="Green R.E."/>
            <person name="Gustincich S."/>
            <person name="Harbers M."/>
            <person name="Hayashi Y."/>
            <person name="Hensch T.K."/>
            <person name="Hirokawa N."/>
            <person name="Hill D."/>
            <person name="Huminiecki L."/>
            <person name="Iacono M."/>
            <person name="Ikeo K."/>
            <person name="Iwama A."/>
            <person name="Ishikawa T."/>
            <person name="Jakt M."/>
            <person name="Kanapin A."/>
            <person name="Katoh M."/>
            <person name="Kawasawa Y."/>
            <person name="Kelso J."/>
            <person name="Kitamura H."/>
            <person name="Kitano H."/>
            <person name="Kollias G."/>
            <person name="Krishnan S.P."/>
            <person name="Kruger A."/>
            <person name="Kummerfeld S.K."/>
            <person name="Kurochkin I.V."/>
            <person name="Lareau L.F."/>
            <person name="Lazarevic D."/>
            <person name="Lipovich L."/>
            <person name="Liu J."/>
            <person name="Liuni S."/>
            <person name="McWilliam S."/>
            <person name="Madan Babu M."/>
            <person name="Madera M."/>
            <person name="Marchionni L."/>
            <person name="Matsuda H."/>
            <person name="Matsuzawa S."/>
            <person name="Miki H."/>
            <person name="Mignone F."/>
            <person name="Miyake S."/>
            <person name="Morris K."/>
            <person name="Mottagui-Tabar S."/>
            <person name="Mulder N."/>
            <person name="Nakano N."/>
            <person name="Nakauchi H."/>
            <person name="Ng P."/>
            <person name="Nilsson R."/>
            <person name="Nishiguchi S."/>
            <person name="Nishikawa S."/>
            <person name="Nori F."/>
            <person name="Ohara O."/>
            <person name="Okazaki Y."/>
            <person name="Orlando V."/>
            <person name="Pang K.C."/>
            <person name="Pavan W.J."/>
            <person name="Pavesi G."/>
            <person name="Pesole G."/>
            <person name="Petrovsky N."/>
            <person name="Piazza S."/>
            <person name="Reed J."/>
            <person name="Reid J.F."/>
            <person name="Ring B.Z."/>
            <person name="Ringwald M."/>
            <person name="Rost B."/>
            <person name="Ruan Y."/>
            <person name="Salzberg S.L."/>
            <person name="Sandelin A."/>
            <person name="Schneider C."/>
            <person name="Schoenbach C."/>
            <person name="Sekiguchi K."/>
            <person name="Semple C.A."/>
            <person name="Seno S."/>
            <person name="Sessa L."/>
            <person name="Sheng Y."/>
            <person name="Shibata Y."/>
            <person name="Shimada H."/>
            <person name="Shimada K."/>
            <person name="Silva D."/>
            <person name="Sinclair B."/>
            <person name="Sperling S."/>
            <person name="Stupka E."/>
            <person name="Sugiura K."/>
            <person name="Sultana R."/>
            <person name="Takenaka Y."/>
            <person name="Taki K."/>
            <person name="Tammoja K."/>
            <person name="Tan S.L."/>
            <person name="Tang S."/>
            <person name="Taylor M.S."/>
            <person name="Tegner J."/>
            <person name="Teichmann S.A."/>
            <person name="Ueda H.R."/>
            <person name="van Nimwegen E."/>
            <person name="Verardo R."/>
            <person name="Wei C.L."/>
            <person name="Yagi K."/>
            <person name="Yamanishi H."/>
            <person name="Zabarovsky E."/>
            <person name="Zhu S."/>
            <person name="Zimmer A."/>
            <person name="Hide W."/>
            <person name="Bult C."/>
            <person name="Grimmond S.M."/>
            <person name="Teasdale R.D."/>
            <person name="Liu E.T."/>
            <person name="Brusic V."/>
            <person name="Quackenbush J."/>
            <person name="Wahlestedt C."/>
            <person name="Mattick J.S."/>
            <person name="Hume D.A."/>
            <person name="Kai C."/>
            <person name="Sasaki D."/>
            <person name="Tomaru Y."/>
            <person name="Fukuda S."/>
            <person name="Kanamori-Katayama M."/>
            <person name="Suzuki M."/>
            <person name="Aoki J."/>
            <person name="Arakawa T."/>
            <person name="Iida J."/>
            <person name="Imamura K."/>
            <person name="Itoh M."/>
            <person name="Kato T."/>
            <person name="Kawaji H."/>
            <person name="Kawagashira N."/>
            <person name="Kawashima T."/>
            <person name="Kojima M."/>
            <person name="Kondo S."/>
            <person name="Konno H."/>
            <person name="Nakano K."/>
            <person name="Ninomiya N."/>
            <person name="Nishio T."/>
            <person name="Okada M."/>
            <person name="Plessy C."/>
            <person name="Shibata K."/>
            <person name="Shiraki T."/>
            <person name="Suzuki S."/>
            <person name="Tagami M."/>
            <person name="Waki K."/>
            <person name="Watahiki A."/>
            <person name="Okamura-Oho Y."/>
            <person name="Suzuki H."/>
            <person name="Kawai J."/>
            <person name="Hayashizaki Y."/>
        </authorList>
    </citation>
    <scope>NUCLEOTIDE SEQUENCE [LARGE SCALE MRNA] (ISOFORMS 1 AND 2)</scope>
    <source>
        <strain>C57BL/6J</strain>
        <strain>NOD</strain>
        <tissue>Aorta</tissue>
        <tissue>Spleen</tissue>
        <tissue>Vein</tissue>
    </source>
</reference>
<reference key="3">
    <citation type="journal article" date="2004" name="Genome Res.">
        <title>The status, quality, and expansion of the NIH full-length cDNA project: the Mammalian Gene Collection (MGC).</title>
        <authorList>
            <consortium name="The MGC Project Team"/>
        </authorList>
    </citation>
    <scope>NUCLEOTIDE SEQUENCE [LARGE SCALE MRNA] (ISOFORM 1)</scope>
    <source>
        <strain>FVB/N</strain>
        <tissue>Colon</tissue>
    </source>
</reference>
<reference key="4">
    <citation type="journal article" date="2005" name="Biochem. Biophys. Res. Commun.">
        <title>A novel inflammation-induced ubiquitin E3 ligase in alveolar type II cells.</title>
        <authorList>
            <person name="Hu Y."/>
            <person name="Nguyen T.T."/>
            <person name="Bui K.C."/>
            <person name="Demello D.E."/>
            <person name="Smith J.B."/>
        </authorList>
    </citation>
    <scope>FUNCTION</scope>
    <scope>TISSUE SPECIFICITY</scope>
    <scope>INDUCTION</scope>
</reference>
<reference key="5">
    <citation type="journal article" date="2022" name="FASEB J.">
        <title>E3 ubiquitin ligase NEURL3 promotes innate antiviral response through catalyzing K63-linked ubiquitination of IRF7.</title>
        <authorList>
            <person name="Qi F."/>
            <person name="Zhang X."/>
            <person name="Wang L."/>
            <person name="Ren C."/>
            <person name="Zhao X."/>
            <person name="Luo J."/>
            <person name="Lu D."/>
        </authorList>
    </citation>
    <scope>FUNCTION</scope>
    <scope>DISRUPTION PHENOTYPE</scope>
</reference>
<feature type="chain" id="PRO_0000325772" description="E3 ubiquitin-protein ligase NEURL3">
    <location>
        <begin position="1"/>
        <end position="254"/>
    </location>
</feature>
<feature type="domain" description="NHR" evidence="3">
    <location>
        <begin position="17"/>
        <end position="174"/>
    </location>
</feature>
<feature type="zinc finger region" description="RING-type" evidence="2">
    <location>
        <begin position="197"/>
        <end position="236"/>
    </location>
</feature>
<feature type="splice variant" id="VSP_032400" description="In isoform 2." evidence="7">
    <original>DPKANAWIRSGEPVPESEVISGE</original>
    <variation>GETPWGPDTECGMETKVQMTSC</variation>
    <location>
        <begin position="173"/>
        <end position="195"/>
    </location>
</feature>
<feature type="splice variant" id="VSP_032401" description="In isoform 2." evidence="7">
    <location>
        <begin position="196"/>
        <end position="254"/>
    </location>
</feature>
<feature type="sequence conflict" description="In Ref. 2; BAC30757." evidence="8" ref="2">
    <original>D</original>
    <variation>N</variation>
    <location>
        <position position="148"/>
    </location>
</feature>
<protein>
    <recommendedName>
        <fullName>E3 ubiquitin-protein ligase NEURL3</fullName>
        <ecNumber>2.3.2.27</ecNumber>
    </recommendedName>
    <alternativeName>
        <fullName>Lung-inducible neuralized-related C3CH4 RING domain protein</fullName>
    </alternativeName>
    <alternativeName>
        <fullName>Neuralized-like protein 3</fullName>
    </alternativeName>
    <alternativeName>
        <fullName evidence="8">RING-type E3 ubiquitin transferase NEURL3</fullName>
    </alternativeName>
</protein>
<gene>
    <name type="primary">Neurl3</name>
    <name type="synonym">Lincr</name>
</gene>
<evidence type="ECO:0000250" key="1">
    <source>
        <dbReference type="UniProtKB" id="Q96EH8"/>
    </source>
</evidence>
<evidence type="ECO:0000255" key="2">
    <source>
        <dbReference type="PROSITE-ProRule" id="PRU00175"/>
    </source>
</evidence>
<evidence type="ECO:0000255" key="3">
    <source>
        <dbReference type="PROSITE-ProRule" id="PRU00400"/>
    </source>
</evidence>
<evidence type="ECO:0000269" key="4">
    <source>
    </source>
</evidence>
<evidence type="ECO:0000269" key="5">
    <source>
    </source>
</evidence>
<evidence type="ECO:0000269" key="6">
    <source>
    </source>
</evidence>
<evidence type="ECO:0000303" key="7">
    <source>
    </source>
</evidence>
<evidence type="ECO:0000305" key="8"/>
<organism>
    <name type="scientific">Mus musculus</name>
    <name type="common">Mouse</name>
    <dbReference type="NCBI Taxonomy" id="10090"/>
    <lineage>
        <taxon>Eukaryota</taxon>
        <taxon>Metazoa</taxon>
        <taxon>Chordata</taxon>
        <taxon>Craniata</taxon>
        <taxon>Vertebrata</taxon>
        <taxon>Euteleostomi</taxon>
        <taxon>Mammalia</taxon>
        <taxon>Eutheria</taxon>
        <taxon>Euarchontoglires</taxon>
        <taxon>Glires</taxon>
        <taxon>Rodentia</taxon>
        <taxon>Myomorpha</taxon>
        <taxon>Muroidea</taxon>
        <taxon>Muridae</taxon>
        <taxon>Murinae</taxon>
        <taxon>Mus</taxon>
        <taxon>Mus</taxon>
    </lineage>
</organism>